<protein>
    <recommendedName>
        <fullName evidence="1">Anthranilate phosphoribosyltransferase</fullName>
        <ecNumber evidence="1">2.4.2.18</ecNumber>
    </recommendedName>
</protein>
<sequence length="342" mass="36047">MITHQQALNRLIDGNELFFDEMLDIMRQIMRGDMTPAQIAGILIGLRVKVESVSEIAAAATVMREFATTVPVAERRHLVDTCGTGGDGAHTFNISTTAAFIVAAAGAQVAKHGGRSVSSSSGSADVLEALGVKLALSAENVGRCIDEIGLGFMFAPNHHTAMKYVAPVRRELGVRTIFNILGPLTNPAGAENQLMGVFHPDLVGIQARVLSQLGARHAMVVHGRDGLDEISLSGPTLVAELKNGWIREYELDPAEFGFSLCSAADLAAPTAEDSKARLLAVLDNQPGPARDIVCLNAGAAIYVAGVTDSLAEGIRLAQELLTSGAARQKLGQLVELTHKLAA</sequence>
<accession>C1D7P3</accession>
<organism>
    <name type="scientific">Laribacter hongkongensis (strain HLHK9)</name>
    <dbReference type="NCBI Taxonomy" id="557598"/>
    <lineage>
        <taxon>Bacteria</taxon>
        <taxon>Pseudomonadati</taxon>
        <taxon>Pseudomonadota</taxon>
        <taxon>Betaproteobacteria</taxon>
        <taxon>Neisseriales</taxon>
        <taxon>Aquaspirillaceae</taxon>
        <taxon>Laribacter</taxon>
    </lineage>
</organism>
<name>TRPD_LARHH</name>
<reference key="1">
    <citation type="journal article" date="2009" name="PLoS Genet.">
        <title>The complete genome and proteome of Laribacter hongkongensis reveal potential mechanisms for adaptations to different temperatures and habitats.</title>
        <authorList>
            <person name="Woo P.C.Y."/>
            <person name="Lau S.K.P."/>
            <person name="Tse H."/>
            <person name="Teng J.L.L."/>
            <person name="Curreem S.O."/>
            <person name="Tsang A.K.L."/>
            <person name="Fan R.Y.Y."/>
            <person name="Wong G.K.M."/>
            <person name="Huang Y."/>
            <person name="Loman N.J."/>
            <person name="Snyder L.A.S."/>
            <person name="Cai J.J."/>
            <person name="Huang J.-D."/>
            <person name="Mak W."/>
            <person name="Pallen M.J."/>
            <person name="Lok S."/>
            <person name="Yuen K.-Y."/>
        </authorList>
    </citation>
    <scope>NUCLEOTIDE SEQUENCE [LARGE SCALE GENOMIC DNA]</scope>
    <source>
        <strain>HLHK9</strain>
    </source>
</reference>
<comment type="function">
    <text evidence="1">Catalyzes the transfer of the phosphoribosyl group of 5-phosphorylribose-1-pyrophosphate (PRPP) to anthranilate to yield N-(5'-phosphoribosyl)-anthranilate (PRA).</text>
</comment>
<comment type="catalytic activity">
    <reaction evidence="1">
        <text>N-(5-phospho-beta-D-ribosyl)anthranilate + diphosphate = 5-phospho-alpha-D-ribose 1-diphosphate + anthranilate</text>
        <dbReference type="Rhea" id="RHEA:11768"/>
        <dbReference type="ChEBI" id="CHEBI:16567"/>
        <dbReference type="ChEBI" id="CHEBI:18277"/>
        <dbReference type="ChEBI" id="CHEBI:33019"/>
        <dbReference type="ChEBI" id="CHEBI:58017"/>
        <dbReference type="EC" id="2.4.2.18"/>
    </reaction>
</comment>
<comment type="cofactor">
    <cofactor evidence="1">
        <name>Mg(2+)</name>
        <dbReference type="ChEBI" id="CHEBI:18420"/>
    </cofactor>
    <text evidence="1">Binds 2 magnesium ions per monomer.</text>
</comment>
<comment type="pathway">
    <text evidence="1">Amino-acid biosynthesis; L-tryptophan biosynthesis; L-tryptophan from chorismate: step 2/5.</text>
</comment>
<comment type="subunit">
    <text evidence="1">Homodimer.</text>
</comment>
<comment type="similarity">
    <text evidence="1">Belongs to the anthranilate phosphoribosyltransferase family.</text>
</comment>
<proteinExistence type="inferred from homology"/>
<gene>
    <name evidence="1" type="primary">trpD</name>
    <name type="ordered locus">LHK_01494</name>
</gene>
<keyword id="KW-0028">Amino-acid biosynthesis</keyword>
<keyword id="KW-0057">Aromatic amino acid biosynthesis</keyword>
<keyword id="KW-0328">Glycosyltransferase</keyword>
<keyword id="KW-0460">Magnesium</keyword>
<keyword id="KW-0479">Metal-binding</keyword>
<keyword id="KW-1185">Reference proteome</keyword>
<keyword id="KW-0808">Transferase</keyword>
<keyword id="KW-0822">Tryptophan biosynthesis</keyword>
<feature type="chain" id="PRO_1000198826" description="Anthranilate phosphoribosyltransferase">
    <location>
        <begin position="1"/>
        <end position="342"/>
    </location>
</feature>
<feature type="binding site" evidence="1">
    <location>
        <position position="83"/>
    </location>
    <ligand>
        <name>5-phospho-alpha-D-ribose 1-diphosphate</name>
        <dbReference type="ChEBI" id="CHEBI:58017"/>
    </ligand>
</feature>
<feature type="binding site" evidence="1">
    <location>
        <position position="83"/>
    </location>
    <ligand>
        <name>anthranilate</name>
        <dbReference type="ChEBI" id="CHEBI:16567"/>
        <label>1</label>
    </ligand>
</feature>
<feature type="binding site" evidence="1">
    <location>
        <begin position="86"/>
        <end position="87"/>
    </location>
    <ligand>
        <name>5-phospho-alpha-D-ribose 1-diphosphate</name>
        <dbReference type="ChEBI" id="CHEBI:58017"/>
    </ligand>
</feature>
<feature type="binding site" evidence="1">
    <location>
        <position position="91"/>
    </location>
    <ligand>
        <name>5-phospho-alpha-D-ribose 1-diphosphate</name>
        <dbReference type="ChEBI" id="CHEBI:58017"/>
    </ligand>
</feature>
<feature type="binding site" evidence="1">
    <location>
        <begin position="93"/>
        <end position="96"/>
    </location>
    <ligand>
        <name>5-phospho-alpha-D-ribose 1-diphosphate</name>
        <dbReference type="ChEBI" id="CHEBI:58017"/>
    </ligand>
</feature>
<feature type="binding site" evidence="1">
    <location>
        <position position="95"/>
    </location>
    <ligand>
        <name>Mg(2+)</name>
        <dbReference type="ChEBI" id="CHEBI:18420"/>
        <label>1</label>
    </ligand>
</feature>
<feature type="binding site" evidence="1">
    <location>
        <begin position="111"/>
        <end position="119"/>
    </location>
    <ligand>
        <name>5-phospho-alpha-D-ribose 1-diphosphate</name>
        <dbReference type="ChEBI" id="CHEBI:58017"/>
    </ligand>
</feature>
<feature type="binding site" evidence="1">
    <location>
        <position position="123"/>
    </location>
    <ligand>
        <name>5-phospho-alpha-D-ribose 1-diphosphate</name>
        <dbReference type="ChEBI" id="CHEBI:58017"/>
    </ligand>
</feature>
<feature type="binding site" evidence="1">
    <location>
        <position position="169"/>
    </location>
    <ligand>
        <name>anthranilate</name>
        <dbReference type="ChEBI" id="CHEBI:16567"/>
        <label>2</label>
    </ligand>
</feature>
<feature type="binding site" evidence="1">
    <location>
        <position position="228"/>
    </location>
    <ligand>
        <name>Mg(2+)</name>
        <dbReference type="ChEBI" id="CHEBI:18420"/>
        <label>2</label>
    </ligand>
</feature>
<feature type="binding site" evidence="1">
    <location>
        <position position="229"/>
    </location>
    <ligand>
        <name>Mg(2+)</name>
        <dbReference type="ChEBI" id="CHEBI:18420"/>
        <label>1</label>
    </ligand>
</feature>
<feature type="binding site" evidence="1">
    <location>
        <position position="229"/>
    </location>
    <ligand>
        <name>Mg(2+)</name>
        <dbReference type="ChEBI" id="CHEBI:18420"/>
        <label>2</label>
    </ligand>
</feature>
<evidence type="ECO:0000255" key="1">
    <source>
        <dbReference type="HAMAP-Rule" id="MF_00211"/>
    </source>
</evidence>
<dbReference type="EC" id="2.4.2.18" evidence="1"/>
<dbReference type="EMBL" id="CP001154">
    <property type="protein sequence ID" value="ACO74483.1"/>
    <property type="molecule type" value="Genomic_DNA"/>
</dbReference>
<dbReference type="RefSeq" id="WP_012696969.1">
    <property type="nucleotide sequence ID" value="NC_012559.1"/>
</dbReference>
<dbReference type="SMR" id="C1D7P3"/>
<dbReference type="STRING" id="557598.LHK_01494"/>
<dbReference type="KEGG" id="lhk:LHK_01494"/>
<dbReference type="eggNOG" id="COG0547">
    <property type="taxonomic scope" value="Bacteria"/>
</dbReference>
<dbReference type="HOGENOM" id="CLU_034315_2_1_4"/>
<dbReference type="UniPathway" id="UPA00035">
    <property type="reaction ID" value="UER00041"/>
</dbReference>
<dbReference type="Proteomes" id="UP000002010">
    <property type="component" value="Chromosome"/>
</dbReference>
<dbReference type="GO" id="GO:0005829">
    <property type="term" value="C:cytosol"/>
    <property type="evidence" value="ECO:0007669"/>
    <property type="project" value="TreeGrafter"/>
</dbReference>
<dbReference type="GO" id="GO:0004048">
    <property type="term" value="F:anthranilate phosphoribosyltransferase activity"/>
    <property type="evidence" value="ECO:0007669"/>
    <property type="project" value="UniProtKB-UniRule"/>
</dbReference>
<dbReference type="GO" id="GO:0000287">
    <property type="term" value="F:magnesium ion binding"/>
    <property type="evidence" value="ECO:0007669"/>
    <property type="project" value="UniProtKB-UniRule"/>
</dbReference>
<dbReference type="GO" id="GO:0000162">
    <property type="term" value="P:L-tryptophan biosynthetic process"/>
    <property type="evidence" value="ECO:0007669"/>
    <property type="project" value="UniProtKB-UniRule"/>
</dbReference>
<dbReference type="FunFam" id="1.20.970.10:FF:000006">
    <property type="entry name" value="Anthranilate phosphoribosyltransferase"/>
    <property type="match status" value="1"/>
</dbReference>
<dbReference type="FunFam" id="3.40.1030.10:FF:000002">
    <property type="entry name" value="Anthranilate phosphoribosyltransferase"/>
    <property type="match status" value="1"/>
</dbReference>
<dbReference type="Gene3D" id="3.40.1030.10">
    <property type="entry name" value="Nucleoside phosphorylase/phosphoribosyltransferase catalytic domain"/>
    <property type="match status" value="1"/>
</dbReference>
<dbReference type="Gene3D" id="1.20.970.10">
    <property type="entry name" value="Transferase, Pyrimidine Nucleoside Phosphorylase, Chain C"/>
    <property type="match status" value="1"/>
</dbReference>
<dbReference type="HAMAP" id="MF_00211">
    <property type="entry name" value="TrpD"/>
    <property type="match status" value="1"/>
</dbReference>
<dbReference type="InterPro" id="IPR005940">
    <property type="entry name" value="Anthranilate_Pribosyl_Tfrase"/>
</dbReference>
<dbReference type="InterPro" id="IPR000312">
    <property type="entry name" value="Glycosyl_Trfase_fam3"/>
</dbReference>
<dbReference type="InterPro" id="IPR017459">
    <property type="entry name" value="Glycosyl_Trfase_fam3_N_dom"/>
</dbReference>
<dbReference type="InterPro" id="IPR036320">
    <property type="entry name" value="Glycosyl_Trfase_fam3_N_dom_sf"/>
</dbReference>
<dbReference type="InterPro" id="IPR035902">
    <property type="entry name" value="Nuc_phospho_transferase"/>
</dbReference>
<dbReference type="NCBIfam" id="TIGR01245">
    <property type="entry name" value="trpD"/>
    <property type="match status" value="1"/>
</dbReference>
<dbReference type="PANTHER" id="PTHR43285">
    <property type="entry name" value="ANTHRANILATE PHOSPHORIBOSYLTRANSFERASE"/>
    <property type="match status" value="1"/>
</dbReference>
<dbReference type="PANTHER" id="PTHR43285:SF2">
    <property type="entry name" value="ANTHRANILATE PHOSPHORIBOSYLTRANSFERASE"/>
    <property type="match status" value="1"/>
</dbReference>
<dbReference type="Pfam" id="PF02885">
    <property type="entry name" value="Glycos_trans_3N"/>
    <property type="match status" value="1"/>
</dbReference>
<dbReference type="Pfam" id="PF00591">
    <property type="entry name" value="Glycos_transf_3"/>
    <property type="match status" value="1"/>
</dbReference>
<dbReference type="SUPFAM" id="SSF52418">
    <property type="entry name" value="Nucleoside phosphorylase/phosphoribosyltransferase catalytic domain"/>
    <property type="match status" value="1"/>
</dbReference>
<dbReference type="SUPFAM" id="SSF47648">
    <property type="entry name" value="Nucleoside phosphorylase/phosphoribosyltransferase N-terminal domain"/>
    <property type="match status" value="1"/>
</dbReference>